<sequence>MSKQTLSFQAEVAQLLHLVTHSLYSNQEIFLRELISNASDACDKLRFAGLNQPALFEDAPQLEVRVSFDQTARTLTITDNGIGMSQQEAIEHLGTIAKSGTKDFMGQLSGDQKQDAQLIGQFGVGFYSGFIVADKITVESRRAGLPASEGVRWASGGTGDFEVETIDRPARGTSVILHLRDSAEEYLNNWKLKSIISRYSDHISLPILMEKQEWKDGELINPGDEKGGRQPGAMVKTGDWETVNQASALWARPKKDVSDAQYAEFYKTISHDPLAPLTWAHNRVEGSTEYTQLLYIPAKAPFDLWNRDKKAGVKLYVKRVFIMDDAEALLPTYLRFVKGVIDSADLPLNVSRELLQESRDVRAIREGSTKRVLSMLEDLARHDRHDSPAPQPAEGADRVSDVVDADDKAKEGKYSQFYAEFGAVLKEGLGEDFANRERLARLLRFASTSSDQASVGLADYKARMKEGQEAIYYITADTLAAAKHSPQLEVFKKKGIEVLLMTDRVDEWALNYLHEFDGTPLQSVAKGAVDLGKLQDEAEKKAAEEAAEAFKPLLARLKETLKDKAEDVRVTTRLVDSPACLVVHGDGMSTQLARLLKQAGQQAPETKPVLEVNASHALVRKLDGSQHFDDLAHILFDQALLAEGGLPADPAAYVKRVNALLV</sequence>
<protein>
    <recommendedName>
        <fullName evidence="1">Chaperone protein HtpG</fullName>
    </recommendedName>
    <alternativeName>
        <fullName evidence="1">Heat shock protein HtpG</fullName>
    </alternativeName>
    <alternativeName>
        <fullName evidence="1">High temperature protein G</fullName>
    </alternativeName>
</protein>
<organism>
    <name type="scientific">Verminephrobacter eiseniae (strain EF01-2)</name>
    <dbReference type="NCBI Taxonomy" id="391735"/>
    <lineage>
        <taxon>Bacteria</taxon>
        <taxon>Pseudomonadati</taxon>
        <taxon>Pseudomonadota</taxon>
        <taxon>Betaproteobacteria</taxon>
        <taxon>Burkholderiales</taxon>
        <taxon>Comamonadaceae</taxon>
        <taxon>Verminephrobacter</taxon>
    </lineage>
</organism>
<evidence type="ECO:0000255" key="1">
    <source>
        <dbReference type="HAMAP-Rule" id="MF_00505"/>
    </source>
</evidence>
<evidence type="ECO:0000256" key="2">
    <source>
        <dbReference type="SAM" id="MobiDB-lite"/>
    </source>
</evidence>
<comment type="function">
    <text evidence="1">Molecular chaperone. Has ATPase activity.</text>
</comment>
<comment type="subunit">
    <text evidence="1">Homodimer.</text>
</comment>
<comment type="subcellular location">
    <subcellularLocation>
        <location evidence="1">Cytoplasm</location>
    </subcellularLocation>
</comment>
<comment type="similarity">
    <text evidence="1">Belongs to the heat shock protein 90 family.</text>
</comment>
<feature type="chain" id="PRO_1000014962" description="Chaperone protein HtpG">
    <location>
        <begin position="1"/>
        <end position="662"/>
    </location>
</feature>
<feature type="region of interest" description="A; substrate-binding" evidence="1">
    <location>
        <begin position="1"/>
        <end position="352"/>
    </location>
</feature>
<feature type="region of interest" description="B" evidence="1">
    <location>
        <begin position="353"/>
        <end position="594"/>
    </location>
</feature>
<feature type="region of interest" description="Disordered" evidence="2">
    <location>
        <begin position="382"/>
        <end position="402"/>
    </location>
</feature>
<feature type="region of interest" description="C" evidence="1">
    <location>
        <begin position="595"/>
        <end position="662"/>
    </location>
</feature>
<accession>A1WF62</accession>
<name>HTPG_VEREI</name>
<gene>
    <name evidence="1" type="primary">htpG</name>
    <name type="ordered locus">Veis_0484</name>
</gene>
<dbReference type="EMBL" id="CP000542">
    <property type="protein sequence ID" value="ABM56269.1"/>
    <property type="molecule type" value="Genomic_DNA"/>
</dbReference>
<dbReference type="RefSeq" id="WP_011808285.1">
    <property type="nucleotide sequence ID" value="NC_008786.1"/>
</dbReference>
<dbReference type="SMR" id="A1WF62"/>
<dbReference type="STRING" id="391735.Veis_0484"/>
<dbReference type="GeneID" id="76459193"/>
<dbReference type="KEGG" id="vei:Veis_0484"/>
<dbReference type="eggNOG" id="COG0326">
    <property type="taxonomic scope" value="Bacteria"/>
</dbReference>
<dbReference type="HOGENOM" id="CLU_006684_3_0_4"/>
<dbReference type="OrthoDB" id="9802640at2"/>
<dbReference type="Proteomes" id="UP000000374">
    <property type="component" value="Chromosome"/>
</dbReference>
<dbReference type="GO" id="GO:0005737">
    <property type="term" value="C:cytoplasm"/>
    <property type="evidence" value="ECO:0007669"/>
    <property type="project" value="UniProtKB-SubCell"/>
</dbReference>
<dbReference type="GO" id="GO:0005524">
    <property type="term" value="F:ATP binding"/>
    <property type="evidence" value="ECO:0007669"/>
    <property type="project" value="UniProtKB-UniRule"/>
</dbReference>
<dbReference type="GO" id="GO:0016887">
    <property type="term" value="F:ATP hydrolysis activity"/>
    <property type="evidence" value="ECO:0007669"/>
    <property type="project" value="InterPro"/>
</dbReference>
<dbReference type="GO" id="GO:0140662">
    <property type="term" value="F:ATP-dependent protein folding chaperone"/>
    <property type="evidence" value="ECO:0007669"/>
    <property type="project" value="InterPro"/>
</dbReference>
<dbReference type="GO" id="GO:0051082">
    <property type="term" value="F:unfolded protein binding"/>
    <property type="evidence" value="ECO:0007669"/>
    <property type="project" value="UniProtKB-UniRule"/>
</dbReference>
<dbReference type="CDD" id="cd16927">
    <property type="entry name" value="HATPase_Hsp90-like"/>
    <property type="match status" value="1"/>
</dbReference>
<dbReference type="FunFam" id="3.30.565.10:FF:000009">
    <property type="entry name" value="Molecular chaperone HtpG"/>
    <property type="match status" value="1"/>
</dbReference>
<dbReference type="Gene3D" id="3.30.230.80">
    <property type="match status" value="1"/>
</dbReference>
<dbReference type="Gene3D" id="3.40.50.11260">
    <property type="match status" value="1"/>
</dbReference>
<dbReference type="Gene3D" id="1.20.120.790">
    <property type="entry name" value="Heat shock protein 90, C-terminal domain"/>
    <property type="match status" value="1"/>
</dbReference>
<dbReference type="Gene3D" id="3.30.565.10">
    <property type="entry name" value="Histidine kinase-like ATPase, C-terminal domain"/>
    <property type="match status" value="1"/>
</dbReference>
<dbReference type="HAMAP" id="MF_00505">
    <property type="entry name" value="HSP90"/>
    <property type="match status" value="1"/>
</dbReference>
<dbReference type="InterPro" id="IPR036890">
    <property type="entry name" value="HATPase_C_sf"/>
</dbReference>
<dbReference type="InterPro" id="IPR037196">
    <property type="entry name" value="HSP90_C"/>
</dbReference>
<dbReference type="InterPro" id="IPR001404">
    <property type="entry name" value="Hsp90_fam"/>
</dbReference>
<dbReference type="InterPro" id="IPR020575">
    <property type="entry name" value="Hsp90_N"/>
</dbReference>
<dbReference type="InterPro" id="IPR020568">
    <property type="entry name" value="Ribosomal_Su5_D2-typ_SF"/>
</dbReference>
<dbReference type="NCBIfam" id="NF003555">
    <property type="entry name" value="PRK05218.1"/>
    <property type="match status" value="1"/>
</dbReference>
<dbReference type="PANTHER" id="PTHR11528">
    <property type="entry name" value="HEAT SHOCK PROTEIN 90 FAMILY MEMBER"/>
    <property type="match status" value="1"/>
</dbReference>
<dbReference type="Pfam" id="PF13589">
    <property type="entry name" value="HATPase_c_3"/>
    <property type="match status" value="1"/>
</dbReference>
<dbReference type="Pfam" id="PF00183">
    <property type="entry name" value="HSP90"/>
    <property type="match status" value="1"/>
</dbReference>
<dbReference type="PIRSF" id="PIRSF002583">
    <property type="entry name" value="Hsp90"/>
    <property type="match status" value="1"/>
</dbReference>
<dbReference type="PRINTS" id="PR00775">
    <property type="entry name" value="HEATSHOCK90"/>
</dbReference>
<dbReference type="SMART" id="SM00387">
    <property type="entry name" value="HATPase_c"/>
    <property type="match status" value="1"/>
</dbReference>
<dbReference type="SUPFAM" id="SSF55874">
    <property type="entry name" value="ATPase domain of HSP90 chaperone/DNA topoisomerase II/histidine kinase"/>
    <property type="match status" value="1"/>
</dbReference>
<dbReference type="SUPFAM" id="SSF110942">
    <property type="entry name" value="HSP90 C-terminal domain"/>
    <property type="match status" value="1"/>
</dbReference>
<dbReference type="SUPFAM" id="SSF54211">
    <property type="entry name" value="Ribosomal protein S5 domain 2-like"/>
    <property type="match status" value="1"/>
</dbReference>
<proteinExistence type="inferred from homology"/>
<reference key="1">
    <citation type="submission" date="2006-12" db="EMBL/GenBank/DDBJ databases">
        <title>Complete sequence of chromosome 1 of Verminephrobacter eiseniae EF01-2.</title>
        <authorList>
            <person name="Copeland A."/>
            <person name="Lucas S."/>
            <person name="Lapidus A."/>
            <person name="Barry K."/>
            <person name="Detter J.C."/>
            <person name="Glavina del Rio T."/>
            <person name="Dalin E."/>
            <person name="Tice H."/>
            <person name="Pitluck S."/>
            <person name="Chertkov O."/>
            <person name="Brettin T."/>
            <person name="Bruce D."/>
            <person name="Han C."/>
            <person name="Tapia R."/>
            <person name="Gilna P."/>
            <person name="Schmutz J."/>
            <person name="Larimer F."/>
            <person name="Land M."/>
            <person name="Hauser L."/>
            <person name="Kyrpides N."/>
            <person name="Kim E."/>
            <person name="Stahl D."/>
            <person name="Richardson P."/>
        </authorList>
    </citation>
    <scope>NUCLEOTIDE SEQUENCE [LARGE SCALE GENOMIC DNA]</scope>
    <source>
        <strain>EF01-2</strain>
    </source>
</reference>
<keyword id="KW-0067">ATP-binding</keyword>
<keyword id="KW-0143">Chaperone</keyword>
<keyword id="KW-0963">Cytoplasm</keyword>
<keyword id="KW-0547">Nucleotide-binding</keyword>
<keyword id="KW-1185">Reference proteome</keyword>
<keyword id="KW-0346">Stress response</keyword>